<proteinExistence type="inferred from homology"/>
<sequence>MSRMPSSFDVTERDLDDMTFGERIIYHCKKQPLVPIGCLLTTGAVILAAQNVRLGNKWKAQYYFRWRVGLQAATLVALVAGSFIYGTSGKELKAKEEQLKEKAKMREKLWIQELERREEETEARRKRAELARMKTLENEEEIKNLEKELSDLENKLGKK</sequence>
<evidence type="ECO:0000250" key="1"/>
<evidence type="ECO:0000255" key="2"/>
<evidence type="ECO:0000255" key="3">
    <source>
        <dbReference type="PROSITE-ProRule" id="PRU00836"/>
    </source>
</evidence>
<evidence type="ECO:0000305" key="4"/>
<keyword id="KW-0175">Coiled coil</keyword>
<keyword id="KW-0472">Membrane</keyword>
<keyword id="KW-0496">Mitochondrion</keyword>
<keyword id="KW-0812">Transmembrane</keyword>
<keyword id="KW-1133">Transmembrane helix</keyword>
<reference key="1">
    <citation type="journal article" date="2009" name="Genome Res.">
        <title>Genome structure of a Saccharomyces cerevisiae strain widely used in bioethanol production.</title>
        <authorList>
            <person name="Argueso J.L."/>
            <person name="Carazzolle M.F."/>
            <person name="Mieczkowski P.A."/>
            <person name="Duarte F.M."/>
            <person name="Netto O.V.C."/>
            <person name="Missawa S.K."/>
            <person name="Galzerani F."/>
            <person name="Costa G.G.L."/>
            <person name="Vidal R.O."/>
            <person name="Noronha M.F."/>
            <person name="Dominska M."/>
            <person name="Andrietta M.G.S."/>
            <person name="Andrietta S.R."/>
            <person name="Cunha A.F."/>
            <person name="Gomes L.H."/>
            <person name="Tavares F.C.A."/>
            <person name="Alcarde A.R."/>
            <person name="Dietrich F.S."/>
            <person name="McCusker J.H."/>
            <person name="Petes T.D."/>
            <person name="Pereira G.A.G."/>
        </authorList>
    </citation>
    <scope>NUCLEOTIDE SEQUENCE [LARGE SCALE GENOMIC DNA]</scope>
    <source>
        <strain>JAY291</strain>
    </source>
</reference>
<name>RCF1_YEAS2</name>
<organism>
    <name type="scientific">Saccharomyces cerevisiae (strain JAY291)</name>
    <name type="common">Baker's yeast</name>
    <dbReference type="NCBI Taxonomy" id="574961"/>
    <lineage>
        <taxon>Eukaryota</taxon>
        <taxon>Fungi</taxon>
        <taxon>Dikarya</taxon>
        <taxon>Ascomycota</taxon>
        <taxon>Saccharomycotina</taxon>
        <taxon>Saccharomycetes</taxon>
        <taxon>Saccharomycetales</taxon>
        <taxon>Saccharomycetaceae</taxon>
        <taxon>Saccharomyces</taxon>
    </lineage>
</organism>
<gene>
    <name type="primary">RCF1</name>
    <name type="synonym">AIM31</name>
    <name type="ORF">C1Q_03587</name>
</gene>
<feature type="chain" id="PRO_0000399654" description="Respiratory supercomplex factor 1, mitochondrial">
    <location>
        <begin position="1"/>
        <end position="159"/>
    </location>
</feature>
<feature type="transmembrane region" description="Helical" evidence="3">
    <location>
        <begin position="32"/>
        <end position="52"/>
    </location>
</feature>
<feature type="transmembrane region" description="Helical" evidence="3">
    <location>
        <begin position="68"/>
        <end position="88"/>
    </location>
</feature>
<feature type="domain" description="HIG1" evidence="3">
    <location>
        <begin position="5"/>
        <end position="96"/>
    </location>
</feature>
<feature type="coiled-coil region" evidence="2">
    <location>
        <begin position="88"/>
        <end position="159"/>
    </location>
</feature>
<accession>C7GT60</accession>
<comment type="function">
    <text evidence="1">Cytochrome c oxidase subunit required for growth under hypoxic conditions. Involved in the assembly of the Complex III-Complex IV supercomplex, as well as in the recruitment of COX13 and RCF2 into cytochrome c oxidase. May also be required for late-stage assembly of the COX12 and COX13 subunits and for cytochrome c oxidase activity (By similarity).</text>
</comment>
<comment type="subunit">
    <text evidence="1">Associates with the respiratory chain complex III/complex IV supercomplex. Interacts with COX3.</text>
</comment>
<comment type="subcellular location">
    <subcellularLocation>
        <location evidence="3">Mitochondrion membrane</location>
        <topology evidence="3">Multi-pass membrane protein</topology>
    </subcellularLocation>
</comment>
<comment type="similarity">
    <text evidence="4">Belongs to the RCF1 family.</text>
</comment>
<dbReference type="EMBL" id="ACFL01000237">
    <property type="protein sequence ID" value="EEU06007.1"/>
    <property type="molecule type" value="Genomic_DNA"/>
</dbReference>
<dbReference type="SMR" id="C7GT60"/>
<dbReference type="Proteomes" id="UP000008073">
    <property type="component" value="Unassembled WGS sequence"/>
</dbReference>
<dbReference type="GO" id="GO:0031966">
    <property type="term" value="C:mitochondrial membrane"/>
    <property type="evidence" value="ECO:0007669"/>
    <property type="project" value="UniProtKB-SubCell"/>
</dbReference>
<dbReference type="GO" id="GO:0097250">
    <property type="term" value="P:mitochondrial respirasome assembly"/>
    <property type="evidence" value="ECO:0007669"/>
    <property type="project" value="TreeGrafter"/>
</dbReference>
<dbReference type="Gene3D" id="6.10.140.1320">
    <property type="match status" value="1"/>
</dbReference>
<dbReference type="InterPro" id="IPR007667">
    <property type="entry name" value="Hypoxia_induced_domain"/>
</dbReference>
<dbReference type="InterPro" id="IPR050355">
    <property type="entry name" value="RCF1"/>
</dbReference>
<dbReference type="PANTHER" id="PTHR12297:SF3">
    <property type="entry name" value="HIG1 DOMAIN FAMILY MEMBER 1A"/>
    <property type="match status" value="1"/>
</dbReference>
<dbReference type="PANTHER" id="PTHR12297">
    <property type="entry name" value="HYPOXIA-INDUCBILE GENE 1 HIG1 -RELATED"/>
    <property type="match status" value="1"/>
</dbReference>
<dbReference type="Pfam" id="PF04588">
    <property type="entry name" value="HIG_1_N"/>
    <property type="match status" value="1"/>
</dbReference>
<dbReference type="PROSITE" id="PS51503">
    <property type="entry name" value="HIG1"/>
    <property type="match status" value="1"/>
</dbReference>
<protein>
    <recommendedName>
        <fullName>Respiratory supercomplex factor 1, mitochondrial</fullName>
    </recommendedName>
    <alternativeName>
        <fullName>Altered inheritance of mitochondria protein 31</fullName>
    </alternativeName>
</protein>